<keyword id="KW-0025">Alternative splicing</keyword>
<keyword id="KW-0129">CBS domain</keyword>
<keyword id="KW-1003">Cell membrane</keyword>
<keyword id="KW-0406">Ion transport</keyword>
<keyword id="KW-0472">Membrane</keyword>
<keyword id="KW-0597">Phosphoprotein</keyword>
<keyword id="KW-1267">Proteomics identification</keyword>
<keyword id="KW-1185">Reference proteome</keyword>
<keyword id="KW-0677">Repeat</keyword>
<keyword id="KW-0812">Transmembrane</keyword>
<keyword id="KW-1133">Transmembrane helix</keyword>
<keyword id="KW-0813">Transport</keyword>
<comment type="function">
    <text evidence="1">Probable metal transporter.</text>
</comment>
<comment type="interaction">
    <interactant intactId="EBI-11986439">
        <id>Q9NRU3</id>
    </interactant>
    <interactant intactId="EBI-7116203">
        <id>O75031</id>
        <label>HSF2BP</label>
    </interactant>
    <organismsDiffer>false</organismsDiffer>
    <experiments>6</experiments>
</comment>
<comment type="interaction">
    <interactant intactId="EBI-11986439">
        <id>Q9NRU3</id>
    </interactant>
    <interactant intactId="EBI-1058467">
        <id>Q93096</id>
        <label>PTP4A1</label>
    </interactant>
    <organismsDiffer>false</organismsDiffer>
    <experiments>7</experiments>
</comment>
<comment type="interaction">
    <interactant intactId="EBI-11986439">
        <id>Q9NRU3</id>
    </interactant>
    <interactant intactId="EBI-1046324">
        <id>Q12974</id>
        <label>PTP4A2</label>
    </interactant>
    <organismsDiffer>false</organismsDiffer>
    <experiments>6</experiments>
</comment>
<comment type="subcellular location">
    <subcellularLocation>
        <location evidence="1">Cell membrane</location>
        <topology evidence="1">Multi-pass membrane protein</topology>
    </subcellularLocation>
</comment>
<comment type="alternative products">
    <event type="alternative splicing"/>
    <isoform>
        <id>Q9NRU3-1</id>
        <name>1</name>
        <sequence type="displayed"/>
    </isoform>
    <isoform>
        <id>Q9NRU3-2</id>
        <name>2</name>
        <sequence type="described" ref="VSP_027076"/>
    </isoform>
</comment>
<comment type="tissue specificity">
    <text evidence="7">Restricted to brain and testis.</text>
</comment>
<comment type="miscellaneous">
    <text>Shares weak sequence similarity with the cyclin family, hence its name. However, it has no cyclin-like function in vivo.</text>
</comment>
<comment type="similarity">
    <text evidence="9">Belongs to the ACDP family.</text>
</comment>
<comment type="sequence caution" evidence="9">
    <conflict type="erroneous initiation">
        <sequence resource="EMBL-CDS" id="AAF86357"/>
    </conflict>
</comment>
<comment type="sequence caution" evidence="9">
    <conflict type="erroneous initiation">
        <sequence resource="EMBL-CDS" id="AAH98103"/>
    </conflict>
</comment>
<comment type="sequence caution" evidence="9">
    <conflict type="erroneous initiation">
        <sequence resource="EMBL-CDS" id="AAH98279"/>
    </conflict>
</comment>
<comment type="sequence caution" evidence="9">
    <conflict type="erroneous initiation">
        <sequence resource="EMBL-CDS" id="AAH98307"/>
    </conflict>
</comment>
<comment type="sequence caution" evidence="9">
    <conflict type="frameshift">
        <sequence resource="EMBL-CDS" id="CAB70798"/>
    </conflict>
</comment>
<gene>
    <name type="primary">CNNM1</name>
    <name type="synonym">ACDP1</name>
</gene>
<evidence type="ECO:0000250" key="1"/>
<evidence type="ECO:0000250" key="2">
    <source>
        <dbReference type="UniProtKB" id="Q0GA42"/>
    </source>
</evidence>
<evidence type="ECO:0000255" key="3"/>
<evidence type="ECO:0000255" key="4">
    <source>
        <dbReference type="PROSITE-ProRule" id="PRU00703"/>
    </source>
</evidence>
<evidence type="ECO:0000255" key="5">
    <source>
        <dbReference type="PROSITE-ProRule" id="PRU01193"/>
    </source>
</evidence>
<evidence type="ECO:0000256" key="6">
    <source>
        <dbReference type="SAM" id="MobiDB-lite"/>
    </source>
</evidence>
<evidence type="ECO:0000269" key="7">
    <source>
    </source>
</evidence>
<evidence type="ECO:0000303" key="8">
    <source>
    </source>
</evidence>
<evidence type="ECO:0000305" key="9"/>
<sequence length="951" mass="104351">MAAAAAAAAAVGVRLRDCCSRGAVLLLFFSLSPRPPAAAAWLLGLRPEDTAGGRVSLEGGTLRAAEGTSFLLRVYFQPGPPATAAPVPSPTLNSGENGTGDWAPRLVFIEEPPGGGGVAPSAVPTRPPGPQRCREQSDWASDVEVLGPLRPGGVAGSALVQVRVRELRKGEAERGGAGGGGKLFSLCAWDGRAWHHHGAAGGFLLRVRPRLYGPGGDLLPPAWLRALGALLLLALSALFSGLRLSLLSLDPVELRVLRNSGSAAEQEQARRVQAVRGRGTHLLCTLLLGQAGANAALAGWLYTSLPPGFGGTGEDYSEEGIHFPWLPALVCTGAVFLGAEICPYSVCSRHGLAIASHSVCLTRLLMAAAFPVCYPLGRLLDWALRQEISTFYTREKLLETLRAADPYSDLVKEELNIIQGALELRTKVVEEVLTPLGDCFMLRSDAVLDFATVSEILRSGYTRIPVYEGDQRHNIVDILFVKDLAFVDPDDCTPLLTVTRFYNRPLHCVFNDTRLDTVLEEFKKGKSHLAIVQRVNNEGEGDPFYEVMGIVTLEDIIEEIIKSEILDETDLYTDNRKKQRVPQRERKRHDFSLFKLSDTEMRVKISPQLLLATHRFMATEVEPFKSLYLSEKILLRLLKHPNVIQELKFDEKNKKAPEHYLYQRNRPVDYFVLLLQGKVEVEVGKEGLRFENGAFTYYGVPAIMTTACSDNDVRKVGSLAGSSVFLNRSPSRCSGLNRSESPNRERSDFGGSNTQLYSSSNNLYMPDYSVHILSDVQFVKITRQQYQNALTACHMDSSPQSPDMEAFTDGDSTKAPTTRGTPQTPKDDPAITLLNNRNSLPCSRSDGLRSPSEVVYLRMEELAFTQEEMTDFEEHSTQQLTLSPAAVPTRAASDSECCNINLDTETSPCSSDFEENVGKKLLRTLSGQKRKRSPEGERTSEDNSNLTPLIT</sequence>
<name>CNNM1_HUMAN</name>
<feature type="chain" id="PRO_0000295758" description="Metal transporter CNNM1">
    <location>
        <begin position="1"/>
        <end position="951"/>
    </location>
</feature>
<feature type="transmembrane region" description="Helical" evidence="3">
    <location>
        <begin position="23"/>
        <end position="43"/>
    </location>
</feature>
<feature type="transmembrane region" description="Helical" evidence="3">
    <location>
        <begin position="222"/>
        <end position="242"/>
    </location>
</feature>
<feature type="transmembrane region" description="Helical" evidence="3">
    <location>
        <begin position="282"/>
        <end position="302"/>
    </location>
</feature>
<feature type="transmembrane region" description="Helical" evidence="3">
    <location>
        <begin position="321"/>
        <end position="341"/>
    </location>
</feature>
<feature type="domain" description="CNNM transmembrane" evidence="5">
    <location>
        <begin position="218"/>
        <end position="414"/>
    </location>
</feature>
<feature type="domain" description="CBS 1" evidence="4">
    <location>
        <begin position="433"/>
        <end position="495"/>
    </location>
</feature>
<feature type="domain" description="CBS 2" evidence="4">
    <location>
        <begin position="502"/>
        <end position="568"/>
    </location>
</feature>
<feature type="region of interest" description="Disordered" evidence="6">
    <location>
        <begin position="116"/>
        <end position="135"/>
    </location>
</feature>
<feature type="region of interest" description="Disordered" evidence="6">
    <location>
        <begin position="731"/>
        <end position="753"/>
    </location>
</feature>
<feature type="region of interest" description="Disordered" evidence="6">
    <location>
        <begin position="795"/>
        <end position="830"/>
    </location>
</feature>
<feature type="region of interest" description="Disordered" evidence="6">
    <location>
        <begin position="920"/>
        <end position="951"/>
    </location>
</feature>
<feature type="compositionally biased region" description="Polar residues" evidence="6">
    <location>
        <begin position="731"/>
        <end position="740"/>
    </location>
</feature>
<feature type="compositionally biased region" description="Polar residues" evidence="6">
    <location>
        <begin position="814"/>
        <end position="824"/>
    </location>
</feature>
<feature type="compositionally biased region" description="Polar residues" evidence="6">
    <location>
        <begin position="942"/>
        <end position="951"/>
    </location>
</feature>
<feature type="modified residue" description="Phosphothreonine" evidence="2">
    <location>
        <position position="821"/>
    </location>
</feature>
<feature type="modified residue" description="Phosphothreonine" evidence="2">
    <location>
        <position position="824"/>
    </location>
</feature>
<feature type="modified residue" description="Phosphoserine" evidence="2">
    <location>
        <position position="850"/>
    </location>
</feature>
<feature type="splice variant" id="VSP_027076" description="In isoform 2." evidence="8">
    <original>CSRSDGLRSPSEVVYLRMEELAFTQEEMTDFEEHSTQQLTLSPAAVPTRAA</original>
    <variation>S</variation>
    <location>
        <begin position="842"/>
        <end position="892"/>
    </location>
</feature>
<feature type="sequence variant" id="VAR_057737" description="In dbSNP:rs2298316.">
    <original>R</original>
    <variation>Q</variation>
    <location>
        <position position="819"/>
    </location>
</feature>
<feature type="sequence conflict" description="In Ref. 4; AAH98307." evidence="9" ref="4">
    <original>S</original>
    <variation>P</variation>
    <location>
        <position position="444"/>
    </location>
</feature>
<dbReference type="EMBL" id="AL391684">
    <property type="status" value="NOT_ANNOTATED_CDS"/>
    <property type="molecule type" value="Genomic_DNA"/>
</dbReference>
<dbReference type="EMBL" id="DA326933">
    <property type="status" value="NOT_ANNOTATED_CDS"/>
    <property type="molecule type" value="mRNA"/>
</dbReference>
<dbReference type="EMBL" id="AF169226">
    <property type="protein sequence ID" value="AAF86357.1"/>
    <property type="status" value="ALT_INIT"/>
    <property type="molecule type" value="mRNA"/>
</dbReference>
<dbReference type="EMBL" id="BC098103">
    <property type="protein sequence ID" value="AAH98103.2"/>
    <property type="status" value="ALT_INIT"/>
    <property type="molecule type" value="mRNA"/>
</dbReference>
<dbReference type="EMBL" id="BC098134">
    <property type="protein sequence ID" value="AAH98134.1"/>
    <property type="molecule type" value="mRNA"/>
</dbReference>
<dbReference type="EMBL" id="BC098279">
    <property type="protein sequence ID" value="AAH98279.2"/>
    <property type="status" value="ALT_INIT"/>
    <property type="molecule type" value="mRNA"/>
</dbReference>
<dbReference type="EMBL" id="BC098307">
    <property type="protein sequence ID" value="AAH98307.2"/>
    <property type="status" value="ALT_INIT"/>
    <property type="molecule type" value="mRNA"/>
</dbReference>
<dbReference type="EMBL" id="AL137536">
    <property type="protein sequence ID" value="CAB70798.1"/>
    <property type="status" value="ALT_FRAME"/>
    <property type="molecule type" value="mRNA"/>
</dbReference>
<dbReference type="CCDS" id="CCDS7478.2">
    <molecule id="Q9NRU3-1"/>
</dbReference>
<dbReference type="PIR" id="T46380">
    <property type="entry name" value="T46380"/>
</dbReference>
<dbReference type="RefSeq" id="NP_001332817.1">
    <molecule id="Q9NRU3-2"/>
    <property type="nucleotide sequence ID" value="NM_001345888.2"/>
</dbReference>
<dbReference type="RefSeq" id="NP_065081.2">
    <molecule id="Q9NRU3-1"/>
    <property type="nucleotide sequence ID" value="NM_020348.3"/>
</dbReference>
<dbReference type="SMR" id="Q9NRU3"/>
<dbReference type="BioGRID" id="117713">
    <property type="interactions" value="56"/>
</dbReference>
<dbReference type="FunCoup" id="Q9NRU3">
    <property type="interactions" value="709"/>
</dbReference>
<dbReference type="IntAct" id="Q9NRU3">
    <property type="interactions" value="53"/>
</dbReference>
<dbReference type="MINT" id="Q9NRU3"/>
<dbReference type="STRING" id="9606.ENSP00000349147"/>
<dbReference type="TCDB" id="1.A.112.1.5">
    <property type="family name" value="the cyclin m mg2+ exporter (cnnm) family"/>
</dbReference>
<dbReference type="GlyGen" id="Q9NRU3">
    <property type="glycosylation" value="2 sites, 2 N-linked glycans (2 sites)"/>
</dbReference>
<dbReference type="iPTMnet" id="Q9NRU3"/>
<dbReference type="PhosphoSitePlus" id="Q9NRU3"/>
<dbReference type="SwissPalm" id="Q9NRU3"/>
<dbReference type="BioMuta" id="CNNM1"/>
<dbReference type="jPOST" id="Q9NRU3"/>
<dbReference type="MassIVE" id="Q9NRU3"/>
<dbReference type="PaxDb" id="9606-ENSP00000349147"/>
<dbReference type="PeptideAtlas" id="Q9NRU3"/>
<dbReference type="ProteomicsDB" id="82424">
    <molecule id="Q9NRU3-1"/>
</dbReference>
<dbReference type="ProteomicsDB" id="82425">
    <molecule id="Q9NRU3-2"/>
</dbReference>
<dbReference type="Pumba" id="Q9NRU3"/>
<dbReference type="Antibodypedia" id="52446">
    <property type="antibodies" value="52 antibodies from 17 providers"/>
</dbReference>
<dbReference type="DNASU" id="26507"/>
<dbReference type="Ensembl" id="ENST00000356713.5">
    <molecule id="Q9NRU3-1"/>
    <property type="protein sequence ID" value="ENSP00000349147.4"/>
    <property type="gene ID" value="ENSG00000119946.12"/>
</dbReference>
<dbReference type="GeneID" id="26507"/>
<dbReference type="KEGG" id="hsa:26507"/>
<dbReference type="MANE-Select" id="ENST00000356713.5">
    <property type="protein sequence ID" value="ENSP00000349147.4"/>
    <property type="RefSeq nucleotide sequence ID" value="NM_020348.3"/>
    <property type="RefSeq protein sequence ID" value="NP_065081.2"/>
</dbReference>
<dbReference type="UCSC" id="uc001kpp.6">
    <molecule id="Q9NRU3-1"/>
    <property type="organism name" value="human"/>
</dbReference>
<dbReference type="AGR" id="HGNC:102"/>
<dbReference type="CTD" id="26507"/>
<dbReference type="DisGeNET" id="26507"/>
<dbReference type="GeneCards" id="CNNM1"/>
<dbReference type="HGNC" id="HGNC:102">
    <property type="gene designation" value="CNNM1"/>
</dbReference>
<dbReference type="HPA" id="ENSG00000119946">
    <property type="expression patterns" value="Tissue enhanced (brain, testis)"/>
</dbReference>
<dbReference type="MIM" id="607802">
    <property type="type" value="gene"/>
</dbReference>
<dbReference type="neXtProt" id="NX_Q9NRU3"/>
<dbReference type="OpenTargets" id="ENSG00000119946"/>
<dbReference type="PharmGKB" id="PA26668"/>
<dbReference type="VEuPathDB" id="HostDB:ENSG00000119946"/>
<dbReference type="eggNOG" id="KOG2118">
    <property type="taxonomic scope" value="Eukaryota"/>
</dbReference>
<dbReference type="GeneTree" id="ENSGT00940000157525"/>
<dbReference type="HOGENOM" id="CLU_011310_1_1_1"/>
<dbReference type="InParanoid" id="Q9NRU3"/>
<dbReference type="OMA" id="NSIMCSR"/>
<dbReference type="OrthoDB" id="5353557at2759"/>
<dbReference type="PAN-GO" id="Q9NRU3">
    <property type="GO annotations" value="4 GO annotations based on evolutionary models"/>
</dbReference>
<dbReference type="PhylomeDB" id="Q9NRU3"/>
<dbReference type="TreeFam" id="TF101012"/>
<dbReference type="PathwayCommons" id="Q9NRU3"/>
<dbReference type="SignaLink" id="Q9NRU3"/>
<dbReference type="BioGRID-ORCS" id="26507">
    <property type="hits" value="13 hits in 1146 CRISPR screens"/>
</dbReference>
<dbReference type="GenomeRNAi" id="26507"/>
<dbReference type="Pharos" id="Q9NRU3">
    <property type="development level" value="Tdark"/>
</dbReference>
<dbReference type="PRO" id="PR:Q9NRU3"/>
<dbReference type="Proteomes" id="UP000005640">
    <property type="component" value="Chromosome 10"/>
</dbReference>
<dbReference type="RNAct" id="Q9NRU3">
    <property type="molecule type" value="protein"/>
</dbReference>
<dbReference type="Bgee" id="ENSG00000119946">
    <property type="expression patterns" value="Expressed in postcentral gyrus and 129 other cell types or tissues"/>
</dbReference>
<dbReference type="GO" id="GO:0030425">
    <property type="term" value="C:dendrite"/>
    <property type="evidence" value="ECO:0007669"/>
    <property type="project" value="Ensembl"/>
</dbReference>
<dbReference type="GO" id="GO:0043025">
    <property type="term" value="C:neuronal cell body"/>
    <property type="evidence" value="ECO:0007669"/>
    <property type="project" value="Ensembl"/>
</dbReference>
<dbReference type="GO" id="GO:0005886">
    <property type="term" value="C:plasma membrane"/>
    <property type="evidence" value="ECO:0000318"/>
    <property type="project" value="GO_Central"/>
</dbReference>
<dbReference type="GO" id="GO:0022857">
    <property type="term" value="F:transmembrane transporter activity"/>
    <property type="evidence" value="ECO:0000318"/>
    <property type="project" value="GO_Central"/>
</dbReference>
<dbReference type="GO" id="GO:0010960">
    <property type="term" value="P:magnesium ion homeostasis"/>
    <property type="evidence" value="ECO:0000318"/>
    <property type="project" value="GO_Central"/>
</dbReference>
<dbReference type="GO" id="GO:0006811">
    <property type="term" value="P:monoatomic ion transport"/>
    <property type="evidence" value="ECO:0007669"/>
    <property type="project" value="UniProtKB-KW"/>
</dbReference>
<dbReference type="CDD" id="cd04590">
    <property type="entry name" value="CBS_pair_CorC_HlyC_assoc"/>
    <property type="match status" value="1"/>
</dbReference>
<dbReference type="FunFam" id="3.10.580.10:FF:000001">
    <property type="entry name" value="Putative metal transporter CNNM3 isoform 2"/>
    <property type="match status" value="1"/>
</dbReference>
<dbReference type="Gene3D" id="3.10.580.10">
    <property type="entry name" value="CBS-domain"/>
    <property type="match status" value="1"/>
</dbReference>
<dbReference type="InterPro" id="IPR045095">
    <property type="entry name" value="ACDP"/>
</dbReference>
<dbReference type="InterPro" id="IPR000644">
    <property type="entry name" value="CBS_dom"/>
</dbReference>
<dbReference type="InterPro" id="IPR046342">
    <property type="entry name" value="CBS_dom_sf"/>
</dbReference>
<dbReference type="InterPro" id="IPR002550">
    <property type="entry name" value="CNNM"/>
</dbReference>
<dbReference type="InterPro" id="IPR044751">
    <property type="entry name" value="Ion_transp-like_CBS"/>
</dbReference>
<dbReference type="PANTHER" id="PTHR12064">
    <property type="entry name" value="METAL TRANSPORTER CNNM"/>
    <property type="match status" value="1"/>
</dbReference>
<dbReference type="PANTHER" id="PTHR12064:SF28">
    <property type="entry name" value="METAL TRANSPORTER CNNM1"/>
    <property type="match status" value="1"/>
</dbReference>
<dbReference type="Pfam" id="PF00571">
    <property type="entry name" value="CBS"/>
    <property type="match status" value="1"/>
</dbReference>
<dbReference type="Pfam" id="PF01595">
    <property type="entry name" value="CNNM"/>
    <property type="match status" value="1"/>
</dbReference>
<dbReference type="Pfam" id="PF25511">
    <property type="entry name" value="Ig_CNNM4_N"/>
    <property type="match status" value="1"/>
</dbReference>
<dbReference type="SUPFAM" id="SSF54631">
    <property type="entry name" value="CBS-domain pair"/>
    <property type="match status" value="1"/>
</dbReference>
<dbReference type="PROSITE" id="PS51371">
    <property type="entry name" value="CBS"/>
    <property type="match status" value="2"/>
</dbReference>
<dbReference type="PROSITE" id="PS51846">
    <property type="entry name" value="CNNM"/>
    <property type="match status" value="1"/>
</dbReference>
<protein>
    <recommendedName>
        <fullName>Metal transporter CNNM1</fullName>
    </recommendedName>
    <alternativeName>
        <fullName>Ancient conserved domain-containing protein 1</fullName>
    </alternativeName>
    <alternativeName>
        <fullName>Cyclin-M1</fullName>
    </alternativeName>
</protein>
<accession>Q9NRU3</accession>
<accession>Q4QQG7</accession>
<accession>Q4QQH8</accession>
<accession>Q4QQP9</accession>
<accession>Q9NT45</accession>
<organism>
    <name type="scientific">Homo sapiens</name>
    <name type="common">Human</name>
    <dbReference type="NCBI Taxonomy" id="9606"/>
    <lineage>
        <taxon>Eukaryota</taxon>
        <taxon>Metazoa</taxon>
        <taxon>Chordata</taxon>
        <taxon>Craniata</taxon>
        <taxon>Vertebrata</taxon>
        <taxon>Euteleostomi</taxon>
        <taxon>Mammalia</taxon>
        <taxon>Eutheria</taxon>
        <taxon>Euarchontoglires</taxon>
        <taxon>Primates</taxon>
        <taxon>Haplorrhini</taxon>
        <taxon>Catarrhini</taxon>
        <taxon>Hominidae</taxon>
        <taxon>Homo</taxon>
    </lineage>
</organism>
<reference key="1">
    <citation type="journal article" date="2004" name="Nature">
        <title>The DNA sequence and comparative analysis of human chromosome 10.</title>
        <authorList>
            <person name="Deloukas P."/>
            <person name="Earthrowl M.E."/>
            <person name="Grafham D.V."/>
            <person name="Rubenfield M."/>
            <person name="French L."/>
            <person name="Steward C.A."/>
            <person name="Sims S.K."/>
            <person name="Jones M.C."/>
            <person name="Searle S."/>
            <person name="Scott C."/>
            <person name="Howe K."/>
            <person name="Hunt S.E."/>
            <person name="Andrews T.D."/>
            <person name="Gilbert J.G.R."/>
            <person name="Swarbreck D."/>
            <person name="Ashurst J.L."/>
            <person name="Taylor A."/>
            <person name="Battles J."/>
            <person name="Bird C.P."/>
            <person name="Ainscough R."/>
            <person name="Almeida J.P."/>
            <person name="Ashwell R.I.S."/>
            <person name="Ambrose K.D."/>
            <person name="Babbage A.K."/>
            <person name="Bagguley C.L."/>
            <person name="Bailey J."/>
            <person name="Banerjee R."/>
            <person name="Bates K."/>
            <person name="Beasley H."/>
            <person name="Bray-Allen S."/>
            <person name="Brown A.J."/>
            <person name="Brown J.Y."/>
            <person name="Burford D.C."/>
            <person name="Burrill W."/>
            <person name="Burton J."/>
            <person name="Cahill P."/>
            <person name="Camire D."/>
            <person name="Carter N.P."/>
            <person name="Chapman J.C."/>
            <person name="Clark S.Y."/>
            <person name="Clarke G."/>
            <person name="Clee C.M."/>
            <person name="Clegg S."/>
            <person name="Corby N."/>
            <person name="Coulson A."/>
            <person name="Dhami P."/>
            <person name="Dutta I."/>
            <person name="Dunn M."/>
            <person name="Faulkner L."/>
            <person name="Frankish A."/>
            <person name="Frankland J.A."/>
            <person name="Garner P."/>
            <person name="Garnett J."/>
            <person name="Gribble S."/>
            <person name="Griffiths C."/>
            <person name="Grocock R."/>
            <person name="Gustafson E."/>
            <person name="Hammond S."/>
            <person name="Harley J.L."/>
            <person name="Hart E."/>
            <person name="Heath P.D."/>
            <person name="Ho T.P."/>
            <person name="Hopkins B."/>
            <person name="Horne J."/>
            <person name="Howden P.J."/>
            <person name="Huckle E."/>
            <person name="Hynds C."/>
            <person name="Johnson C."/>
            <person name="Johnson D."/>
            <person name="Kana A."/>
            <person name="Kay M."/>
            <person name="Kimberley A.M."/>
            <person name="Kershaw J.K."/>
            <person name="Kokkinaki M."/>
            <person name="Laird G.K."/>
            <person name="Lawlor S."/>
            <person name="Lee H.M."/>
            <person name="Leongamornlert D.A."/>
            <person name="Laird G."/>
            <person name="Lloyd C."/>
            <person name="Lloyd D.M."/>
            <person name="Loveland J."/>
            <person name="Lovell J."/>
            <person name="McLaren S."/>
            <person name="McLay K.E."/>
            <person name="McMurray A."/>
            <person name="Mashreghi-Mohammadi M."/>
            <person name="Matthews L."/>
            <person name="Milne S."/>
            <person name="Nickerson T."/>
            <person name="Nguyen M."/>
            <person name="Overton-Larty E."/>
            <person name="Palmer S.A."/>
            <person name="Pearce A.V."/>
            <person name="Peck A.I."/>
            <person name="Pelan S."/>
            <person name="Phillimore B."/>
            <person name="Porter K."/>
            <person name="Rice C.M."/>
            <person name="Rogosin A."/>
            <person name="Ross M.T."/>
            <person name="Sarafidou T."/>
            <person name="Sehra H.K."/>
            <person name="Shownkeen R."/>
            <person name="Skuce C.D."/>
            <person name="Smith M."/>
            <person name="Standring L."/>
            <person name="Sycamore N."/>
            <person name="Tester J."/>
            <person name="Thorpe A."/>
            <person name="Torcasso W."/>
            <person name="Tracey A."/>
            <person name="Tromans A."/>
            <person name="Tsolas J."/>
            <person name="Wall M."/>
            <person name="Walsh J."/>
            <person name="Wang H."/>
            <person name="Weinstock K."/>
            <person name="West A.P."/>
            <person name="Willey D.L."/>
            <person name="Whitehead S.L."/>
            <person name="Wilming L."/>
            <person name="Wray P.W."/>
            <person name="Young L."/>
            <person name="Chen Y."/>
            <person name="Lovering R.C."/>
            <person name="Moschonas N.K."/>
            <person name="Siebert R."/>
            <person name="Fechtel K."/>
            <person name="Bentley D."/>
            <person name="Durbin R.M."/>
            <person name="Hubbard T."/>
            <person name="Doucette-Stamm L."/>
            <person name="Beck S."/>
            <person name="Smith D.R."/>
            <person name="Rogers J."/>
        </authorList>
    </citation>
    <scope>NUCLEOTIDE SEQUENCE [LARGE SCALE GENOMIC DNA]</scope>
</reference>
<reference key="2">
    <citation type="journal article" date="2006" name="Genome Res.">
        <title>Diversification of transcriptional modulation: large-scale identification and characterization of putative alternative promoters of human genes.</title>
        <authorList>
            <person name="Kimura K."/>
            <person name="Wakamatsu A."/>
            <person name="Suzuki Y."/>
            <person name="Ota T."/>
            <person name="Nishikawa T."/>
            <person name="Yamashita R."/>
            <person name="Yamamoto J."/>
            <person name="Sekine M."/>
            <person name="Tsuritani K."/>
            <person name="Wakaguri H."/>
            <person name="Ishii S."/>
            <person name="Sugiyama T."/>
            <person name="Saito K."/>
            <person name="Isono Y."/>
            <person name="Irie R."/>
            <person name="Kushida N."/>
            <person name="Yoneyama T."/>
            <person name="Otsuka R."/>
            <person name="Kanda K."/>
            <person name="Yokoi T."/>
            <person name="Kondo H."/>
            <person name="Wagatsuma M."/>
            <person name="Murakawa K."/>
            <person name="Ishida S."/>
            <person name="Ishibashi T."/>
            <person name="Takahashi-Fujii A."/>
            <person name="Tanase T."/>
            <person name="Nagai K."/>
            <person name="Kikuchi H."/>
            <person name="Nakai K."/>
            <person name="Isogai T."/>
            <person name="Sugano S."/>
        </authorList>
    </citation>
    <scope>NUCLEOTIDE SEQUENCE [LARGE SCALE MRNA] OF 1-202</scope>
    <source>
        <tissue>Hippocampus</tissue>
    </source>
</reference>
<reference key="3">
    <citation type="journal article" date="2003" name="Gene">
        <title>Molecular cloning and characterization of a novel gene family of four ancient conserved domain proteins (ACDP).</title>
        <authorList>
            <person name="Wang C.-Y."/>
            <person name="Shi J.-D."/>
            <person name="Yang P."/>
            <person name="Kumar P.G."/>
            <person name="Li Q.-Z."/>
            <person name="Run Q.-G."/>
            <person name="Su Y.-C."/>
            <person name="Scott H.S."/>
            <person name="Kao K.-J."/>
            <person name="She J.-X."/>
        </authorList>
    </citation>
    <scope>NUCLEOTIDE SEQUENCE [MRNA] OF 297-951 (ISOFORM 1)</scope>
    <scope>TISSUE SPECIFICITY</scope>
</reference>
<reference key="4">
    <citation type="journal article" date="2004" name="Genome Res.">
        <title>The status, quality, and expansion of the NIH full-length cDNA project: the Mammalian Gene Collection (MGC).</title>
        <authorList>
            <consortium name="The MGC Project Team"/>
        </authorList>
    </citation>
    <scope>NUCLEOTIDE SEQUENCE [LARGE SCALE MRNA] OF 314-951 (ISOFORMS 1 AND 2)</scope>
</reference>
<reference key="5">
    <citation type="journal article" date="2007" name="BMC Genomics">
        <title>The full-ORF clone resource of the German cDNA consortium.</title>
        <authorList>
            <person name="Bechtel S."/>
            <person name="Rosenfelder H."/>
            <person name="Duda A."/>
            <person name="Schmidt C.P."/>
            <person name="Ernst U."/>
            <person name="Wellenreuther R."/>
            <person name="Mehrle A."/>
            <person name="Schuster C."/>
            <person name="Bahr A."/>
            <person name="Bloecker H."/>
            <person name="Heubner D."/>
            <person name="Hoerlein A."/>
            <person name="Michel G."/>
            <person name="Wedler H."/>
            <person name="Koehrer K."/>
            <person name="Ottenwaelder B."/>
            <person name="Poustka A."/>
            <person name="Wiemann S."/>
            <person name="Schupp I."/>
        </authorList>
    </citation>
    <scope>NUCLEOTIDE SEQUENCE [LARGE SCALE MRNA] OF 781-951 (ISOFORM 1)</scope>
    <source>
        <tissue>Testis</tissue>
    </source>
</reference>
<reference key="6">
    <citation type="journal article" date="2003" name="Am. J. Med. Genet. A">
        <title>High resolution mapping and mutation analyses of candidate genes in the urofacial syndrome (UFS) critical region.</title>
        <authorList>
            <person name="Wang C.-Y."/>
            <person name="Davoodi-Semiromi A."/>
            <person name="Shi J.-D."/>
            <person name="Yang P."/>
            <person name="Huang Y.-Q."/>
            <person name="Agundez J.A.G."/>
            <person name="Moran J.M."/>
            <person name="Ochoa B."/>
            <person name="Hawkins-Lee B."/>
            <person name="She J.-X."/>
        </authorList>
    </citation>
    <scope>IDENTIFICATION</scope>
</reference>
<proteinExistence type="evidence at protein level"/>